<evidence type="ECO:0000250" key="1"/>
<evidence type="ECO:0000255" key="2"/>
<evidence type="ECO:0000305" key="3"/>
<reference key="1">
    <citation type="journal article" date="2005" name="Nature">
        <title>The genome of the social amoeba Dictyostelium discoideum.</title>
        <authorList>
            <person name="Eichinger L."/>
            <person name="Pachebat J.A."/>
            <person name="Gloeckner G."/>
            <person name="Rajandream M.A."/>
            <person name="Sucgang R."/>
            <person name="Berriman M."/>
            <person name="Song J."/>
            <person name="Olsen R."/>
            <person name="Szafranski K."/>
            <person name="Xu Q."/>
            <person name="Tunggal B."/>
            <person name="Kummerfeld S."/>
            <person name="Madera M."/>
            <person name="Konfortov B.A."/>
            <person name="Rivero F."/>
            <person name="Bankier A.T."/>
            <person name="Lehmann R."/>
            <person name="Hamlin N."/>
            <person name="Davies R."/>
            <person name="Gaudet P."/>
            <person name="Fey P."/>
            <person name="Pilcher K."/>
            <person name="Chen G."/>
            <person name="Saunders D."/>
            <person name="Sodergren E.J."/>
            <person name="Davis P."/>
            <person name="Kerhornou A."/>
            <person name="Nie X."/>
            <person name="Hall N."/>
            <person name="Anjard C."/>
            <person name="Hemphill L."/>
            <person name="Bason N."/>
            <person name="Farbrother P."/>
            <person name="Desany B."/>
            <person name="Just E."/>
            <person name="Morio T."/>
            <person name="Rost R."/>
            <person name="Churcher C.M."/>
            <person name="Cooper J."/>
            <person name="Haydock S."/>
            <person name="van Driessche N."/>
            <person name="Cronin A."/>
            <person name="Goodhead I."/>
            <person name="Muzny D.M."/>
            <person name="Mourier T."/>
            <person name="Pain A."/>
            <person name="Lu M."/>
            <person name="Harper D."/>
            <person name="Lindsay R."/>
            <person name="Hauser H."/>
            <person name="James K.D."/>
            <person name="Quiles M."/>
            <person name="Madan Babu M."/>
            <person name="Saito T."/>
            <person name="Buchrieser C."/>
            <person name="Wardroper A."/>
            <person name="Felder M."/>
            <person name="Thangavelu M."/>
            <person name="Johnson D."/>
            <person name="Knights A."/>
            <person name="Loulseged H."/>
            <person name="Mungall K.L."/>
            <person name="Oliver K."/>
            <person name="Price C."/>
            <person name="Quail M.A."/>
            <person name="Urushihara H."/>
            <person name="Hernandez J."/>
            <person name="Rabbinowitsch E."/>
            <person name="Steffen D."/>
            <person name="Sanders M."/>
            <person name="Ma J."/>
            <person name="Kohara Y."/>
            <person name="Sharp S."/>
            <person name="Simmonds M.N."/>
            <person name="Spiegler S."/>
            <person name="Tivey A."/>
            <person name="Sugano S."/>
            <person name="White B."/>
            <person name="Walker D."/>
            <person name="Woodward J.R."/>
            <person name="Winckler T."/>
            <person name="Tanaka Y."/>
            <person name="Shaulsky G."/>
            <person name="Schleicher M."/>
            <person name="Weinstock G.M."/>
            <person name="Rosenthal A."/>
            <person name="Cox E.C."/>
            <person name="Chisholm R.L."/>
            <person name="Gibbs R.A."/>
            <person name="Loomis W.F."/>
            <person name="Platzer M."/>
            <person name="Kay R.R."/>
            <person name="Williams J.G."/>
            <person name="Dear P.H."/>
            <person name="Noegel A.A."/>
            <person name="Barrell B.G."/>
            <person name="Kuspa A."/>
        </authorList>
    </citation>
    <scope>NUCLEOTIDE SEQUENCE [LARGE SCALE GENOMIC DNA]</scope>
    <source>
        <strain>AX4</strain>
    </source>
</reference>
<gene>
    <name type="primary">dcd2B</name>
    <name type="ORF">DDB_G0268374</name>
</gene>
<protein>
    <recommendedName>
        <fullName>Neutral ceramidase B</fullName>
        <shortName>N-CDase B</shortName>
        <shortName>NCDase B</shortName>
        <ecNumber>3.5.1.23</ecNumber>
    </recommendedName>
    <alternativeName>
        <fullName>Acylsphingosine deacylase 2B</fullName>
    </alternativeName>
    <alternativeName>
        <fullName>N-acylsphingosine amidohydrolase 2B</fullName>
    </alternativeName>
</protein>
<comment type="function">
    <text evidence="1">Hydrolyzes the sphingolipid ceramide into sphingosine and free fatty acid.</text>
</comment>
<comment type="catalytic activity">
    <reaction>
        <text>an N-acylsphing-4-enine + H2O = sphing-4-enine + a fatty acid</text>
        <dbReference type="Rhea" id="RHEA:20856"/>
        <dbReference type="ChEBI" id="CHEBI:15377"/>
        <dbReference type="ChEBI" id="CHEBI:28868"/>
        <dbReference type="ChEBI" id="CHEBI:52639"/>
        <dbReference type="ChEBI" id="CHEBI:57756"/>
        <dbReference type="EC" id="3.5.1.23"/>
    </reaction>
</comment>
<comment type="subcellular location">
    <subcellularLocation>
        <location evidence="3">Secreted</location>
    </subcellularLocation>
</comment>
<comment type="similarity">
    <text evidence="3">Belongs to the neutral ceramidase family.</text>
</comment>
<accession>Q55G11</accession>
<sequence>MINSFKKLIILISLVIILLSSNNIFIDSFKIPVNQKNVKSSGDSSYQIGAGIYDITGASAEVNLMGYANPLQVGAGIHFRQRARAFVFVDSNGNRAVYVSTDSCMIFQEVKIHVVELLQDIFGPNVYTEANVLLSGTHTHSGPAGFSQYALYGITSLGFYKKNFDTICNGIVQAIVKAHKSVQPANMFTETGELWNTNINRSPFAYDNNPEEEKAMYDSNVDKNMTVLRIEDMNGNPFAAISFFAVHCTSMNNTNHLISGDNKGYASYLWEKQVNGPGTAGKGPFVAAFGQSNEGDVSPNTRGPTCRDGSPCDYKTSTCNGRNEECWSLGPGKDGDMFESTQIIGGNQFNKALELFNNASIQVSGPVQYRHSWVQFTNVSVEPPYNSGVDNATTCRGAMGYSFAAGTTDGPGAFNFVQSDNNTSGNPFWNFIGDFIAKPTPDQIRCQSPKPILLDVGMVEPIPWVPDVMPIQIVTIGQIVLVAVPGEFTTMSGRRLRNSVREIIGESIENPIVLIAGLSNTYSGYIATFEEYQVQRYEGASTVFGPHTLGSYMQEFGKLAQSIVDGTTVPAGPTPRNLTGHTLFFLPPVIVDAAPDFDDFGEVSIDVNLNYSVNETVSCVFYGGNPRNDFMIESSFLSVDLLTGTDQWTTVLDDGDWDTKFKWKMHDLGFSLITIEWVIAPDTTPGTYRITHSGFAKKNPFSSNLTPYQGISRNFVVQ</sequence>
<keyword id="KW-0325">Glycoprotein</keyword>
<keyword id="KW-0378">Hydrolase</keyword>
<keyword id="KW-0443">Lipid metabolism</keyword>
<keyword id="KW-1185">Reference proteome</keyword>
<keyword id="KW-0964">Secreted</keyword>
<keyword id="KW-0732">Signal</keyword>
<keyword id="KW-0746">Sphingolipid metabolism</keyword>
<organism>
    <name type="scientific">Dictyostelium discoideum</name>
    <name type="common">Social amoeba</name>
    <dbReference type="NCBI Taxonomy" id="44689"/>
    <lineage>
        <taxon>Eukaryota</taxon>
        <taxon>Amoebozoa</taxon>
        <taxon>Evosea</taxon>
        <taxon>Eumycetozoa</taxon>
        <taxon>Dictyostelia</taxon>
        <taxon>Dictyosteliales</taxon>
        <taxon>Dictyosteliaceae</taxon>
        <taxon>Dictyostelium</taxon>
    </lineage>
</organism>
<dbReference type="EC" id="3.5.1.23"/>
<dbReference type="EMBL" id="AAFI02000003">
    <property type="protein sequence ID" value="EAL73640.1"/>
    <property type="molecule type" value="Genomic_DNA"/>
</dbReference>
<dbReference type="RefSeq" id="XP_647372.1">
    <property type="nucleotide sequence ID" value="XM_642280.1"/>
</dbReference>
<dbReference type="SMR" id="Q55G11"/>
<dbReference type="FunCoup" id="Q55G11">
    <property type="interactions" value="8"/>
</dbReference>
<dbReference type="STRING" id="44689.Q55G11"/>
<dbReference type="GlyCosmos" id="Q55G11">
    <property type="glycosylation" value="10 sites, No reported glycans"/>
</dbReference>
<dbReference type="GlyGen" id="Q55G11">
    <property type="glycosylation" value="12 sites"/>
</dbReference>
<dbReference type="PaxDb" id="44689-DDB0232168"/>
<dbReference type="EnsemblProtists" id="EAL73640">
    <property type="protein sequence ID" value="EAL73640"/>
    <property type="gene ID" value="DDB_G0268374"/>
</dbReference>
<dbReference type="GeneID" id="8616181"/>
<dbReference type="KEGG" id="ddi:DDB_G0268374"/>
<dbReference type="dictyBase" id="DDB_G0268374">
    <property type="gene designation" value="dcd2B"/>
</dbReference>
<dbReference type="VEuPathDB" id="AmoebaDB:DDB_G0268374"/>
<dbReference type="eggNOG" id="KOG2232">
    <property type="taxonomic scope" value="Eukaryota"/>
</dbReference>
<dbReference type="HOGENOM" id="CLU_011300_2_0_1"/>
<dbReference type="InParanoid" id="Q55G11"/>
<dbReference type="OMA" id="WTQVRSD"/>
<dbReference type="PhylomeDB" id="Q55G11"/>
<dbReference type="PRO" id="PR:Q55G11"/>
<dbReference type="Proteomes" id="UP000002195">
    <property type="component" value="Chromosome 1"/>
</dbReference>
<dbReference type="GO" id="GO:0005576">
    <property type="term" value="C:extracellular region"/>
    <property type="evidence" value="ECO:0000318"/>
    <property type="project" value="GO_Central"/>
</dbReference>
<dbReference type="GO" id="GO:0016020">
    <property type="term" value="C:membrane"/>
    <property type="evidence" value="ECO:0007669"/>
    <property type="project" value="GOC"/>
</dbReference>
<dbReference type="GO" id="GO:0017040">
    <property type="term" value="F:N-acylsphingosine amidohydrolase activity"/>
    <property type="evidence" value="ECO:0000250"/>
    <property type="project" value="dictyBase"/>
</dbReference>
<dbReference type="GO" id="GO:0046514">
    <property type="term" value="P:ceramide catabolic process"/>
    <property type="evidence" value="ECO:0000318"/>
    <property type="project" value="GO_Central"/>
</dbReference>
<dbReference type="GO" id="GO:0006672">
    <property type="term" value="P:ceramide metabolic process"/>
    <property type="evidence" value="ECO:0000305"/>
    <property type="project" value="dictyBase"/>
</dbReference>
<dbReference type="GO" id="GO:0042759">
    <property type="term" value="P:long-chain fatty acid biosynthetic process"/>
    <property type="evidence" value="ECO:0000318"/>
    <property type="project" value="GO_Central"/>
</dbReference>
<dbReference type="GO" id="GO:0046512">
    <property type="term" value="P:sphingosine biosynthetic process"/>
    <property type="evidence" value="ECO:0000318"/>
    <property type="project" value="GO_Central"/>
</dbReference>
<dbReference type="FunFam" id="2.60.40.2300:FF:000007">
    <property type="entry name" value="Neutral ceramidase B"/>
    <property type="match status" value="1"/>
</dbReference>
<dbReference type="Gene3D" id="2.60.40.2300">
    <property type="entry name" value="Neutral/alkaline non-lysosomal ceramidase, C-terminal domain"/>
    <property type="match status" value="1"/>
</dbReference>
<dbReference type="InterPro" id="IPR006823">
    <property type="entry name" value="Ceramidase_alk"/>
</dbReference>
<dbReference type="InterPro" id="IPR038445">
    <property type="entry name" value="NCDase_C_sf"/>
</dbReference>
<dbReference type="InterPro" id="IPR031331">
    <property type="entry name" value="NEUT/ALK_ceramidase_C"/>
</dbReference>
<dbReference type="InterPro" id="IPR031329">
    <property type="entry name" value="NEUT/ALK_ceramidase_N"/>
</dbReference>
<dbReference type="PANTHER" id="PTHR12670">
    <property type="entry name" value="CERAMIDASE"/>
    <property type="match status" value="1"/>
</dbReference>
<dbReference type="PANTHER" id="PTHR12670:SF1">
    <property type="entry name" value="NEUTRAL CERAMIDASE"/>
    <property type="match status" value="1"/>
</dbReference>
<dbReference type="Pfam" id="PF04734">
    <property type="entry name" value="Ceramidase_alk"/>
    <property type="match status" value="1"/>
</dbReference>
<dbReference type="Pfam" id="PF17048">
    <property type="entry name" value="Ceramidse_alk_C"/>
    <property type="match status" value="1"/>
</dbReference>
<feature type="signal peptide" evidence="2">
    <location>
        <begin position="1"/>
        <end position="20"/>
    </location>
</feature>
<feature type="chain" id="PRO_0000247109" description="Neutral ceramidase B">
    <location>
        <begin position="21"/>
        <end position="718"/>
    </location>
</feature>
<feature type="active site" description="Nucleophile" evidence="1">
    <location>
        <position position="298"/>
    </location>
</feature>
<feature type="glycosylation site" description="N-linked (GlcNAc...) asparagine" evidence="2">
    <location>
        <position position="224"/>
    </location>
</feature>
<feature type="glycosylation site" description="N-linked (GlcNAc...) asparagine" evidence="2">
    <location>
        <position position="252"/>
    </location>
</feature>
<feature type="glycosylation site" description="N-linked (GlcNAc...) asparagine" evidence="2">
    <location>
        <position position="358"/>
    </location>
</feature>
<feature type="glycosylation site" description="N-linked (GlcNAc...) asparagine" evidence="2">
    <location>
        <position position="378"/>
    </location>
</feature>
<feature type="glycosylation site" description="N-linked (GlcNAc...) asparagine" evidence="2">
    <location>
        <position position="391"/>
    </location>
</feature>
<feature type="glycosylation site" description="N-linked (GlcNAc...) asparagine" evidence="2">
    <location>
        <position position="421"/>
    </location>
</feature>
<feature type="glycosylation site" description="N-linked (GlcNAc...) asparagine" evidence="2">
    <location>
        <position position="422"/>
    </location>
</feature>
<feature type="glycosylation site" description="N-linked (GlcNAc...) asparagine" evidence="2">
    <location>
        <position position="577"/>
    </location>
</feature>
<feature type="glycosylation site" description="N-linked (GlcNAc...) asparagine" evidence="2">
    <location>
        <position position="610"/>
    </location>
</feature>
<feature type="glycosylation site" description="N-linked (GlcNAc...) asparagine" evidence="2">
    <location>
        <position position="614"/>
    </location>
</feature>
<proteinExistence type="inferred from homology"/>
<name>NCSEB_DICDI</name>